<accession>O53578</accession>
<accession>F2GDF8</accession>
<accession>I6YH65</accession>
<accession>Q8VIT5</accession>
<comment type="function">
    <text evidence="3 5">Component of a biotin-dependent acyl-CoA carboxylase complex. This subunit transfers the CO2 from carboxybiotin to the CoA ester substrate (PubMed:16354663, PubMed:28222482). When associated with the alpha3 subunit AccA3, the beta5 subunit AccD5 and the epsilon subunit AccE5, forms the LCC complex, which is involved in the carboxylation of long chain acyl-CoA (PubMed:16354663, PubMed:28222482). The LCC complex can use C16-C24 substrates, the highest specific activity is obtained with carboxy-C20-CoA (PubMed:28222482). Has low activity with acetyl-CoA and propionyl-CoA (PubMed:16354663).</text>
</comment>
<comment type="biophysicochemical properties">
    <kinetics>
        <KM evidence="5">32 uM for carboxy-C20-CoA (in the presence of AccA3, AccD5 and AccE5)</KM>
        <Vmax evidence="5">2.44 nmol/min/mg enzyme with carboxy-C20-CoA as substrate (in the presence of AccA3, AccD5 and AccE5)</Vmax>
    </kinetics>
</comment>
<comment type="subunit">
    <text evidence="3 5">The biotin-dependent long-chain acyl-CoA carboxylase (LCC) complex is composed of AccA3, which contains the biotin carboxylase (BC) and biotin carboxyl carrier protein (BCCP) domains, and AccD4, which contains the carboxyl transferase (CT) domain (PubMed:16354663, PubMed:28222482). The complex also contains the beta5 subunit AccD5 and the epsilon subunit AccE5. The four subunits are essential for activity, but AccD5, together with AccE5, probably plays a structural role rather than a catalytic one (PubMed:28222482).</text>
</comment>
<comment type="induction">
    <text evidence="4">Expressed at higher levels during the exponential growth phase.</text>
</comment>
<comment type="similarity">
    <text evidence="7">Belongs to the AccD/PCCB family.</text>
</comment>
<keyword id="KW-0903">Direct protein sequencing</keyword>
<keyword id="KW-1185">Reference proteome</keyword>
<keyword id="KW-0808">Transferase</keyword>
<proteinExistence type="evidence at protein level"/>
<feature type="chain" id="PRO_0000452370" description="Biotin-dependent long chain acyl-coenzyme A carboxylase beta4 subunit">
    <location>
        <begin position="1"/>
        <end position="522"/>
    </location>
</feature>
<feature type="domain" description="CoA carboxyltransferase N-terminal" evidence="1">
    <location>
        <begin position="11"/>
        <end position="261"/>
    </location>
</feature>
<feature type="domain" description="CoA carboxyltransferase C-terminal" evidence="2">
    <location>
        <begin position="270"/>
        <end position="503"/>
    </location>
</feature>
<dbReference type="EC" id="2.1.3.-" evidence="3 5"/>
<dbReference type="EMBL" id="AL123456">
    <property type="protein sequence ID" value="CCP46628.1"/>
    <property type="molecule type" value="Genomic_DNA"/>
</dbReference>
<dbReference type="RefSeq" id="NP_218316.2">
    <property type="nucleotide sequence ID" value="NC_000962.3"/>
</dbReference>
<dbReference type="RefSeq" id="WP_003420767.1">
    <property type="nucleotide sequence ID" value="NZ_NVQJ01000022.1"/>
</dbReference>
<dbReference type="SMR" id="O53578"/>
<dbReference type="STRING" id="83332.Rv3799c"/>
<dbReference type="PaxDb" id="83332-Rv3799c"/>
<dbReference type="GeneID" id="886131"/>
<dbReference type="KEGG" id="mtu:Rv3799c"/>
<dbReference type="KEGG" id="mtv:RVBD_3799c"/>
<dbReference type="PATRIC" id="fig|83332.111.peg.4224"/>
<dbReference type="TubercuList" id="Rv3799c"/>
<dbReference type="eggNOG" id="COG4799">
    <property type="taxonomic scope" value="Bacteria"/>
</dbReference>
<dbReference type="InParanoid" id="O53578"/>
<dbReference type="OrthoDB" id="4434131at2"/>
<dbReference type="PhylomeDB" id="O53578"/>
<dbReference type="BioCyc" id="MetaCyc:G185E-8095-MONOMER"/>
<dbReference type="SABIO-RK" id="O53578"/>
<dbReference type="Proteomes" id="UP000001584">
    <property type="component" value="Chromosome"/>
</dbReference>
<dbReference type="GO" id="GO:0009317">
    <property type="term" value="C:acetyl-CoA carboxylase complex"/>
    <property type="evidence" value="ECO:0000314"/>
    <property type="project" value="MTBBASE"/>
</dbReference>
<dbReference type="GO" id="GO:0009274">
    <property type="term" value="C:peptidoglycan-based cell wall"/>
    <property type="evidence" value="ECO:0007005"/>
    <property type="project" value="MTBBASE"/>
</dbReference>
<dbReference type="GO" id="GO:0005886">
    <property type="term" value="C:plasma membrane"/>
    <property type="evidence" value="ECO:0007005"/>
    <property type="project" value="MTBBASE"/>
</dbReference>
<dbReference type="GO" id="GO:0003989">
    <property type="term" value="F:acetyl-CoA carboxylase activity"/>
    <property type="evidence" value="ECO:0000314"/>
    <property type="project" value="MTBBASE"/>
</dbReference>
<dbReference type="GO" id="GO:0004658">
    <property type="term" value="F:propionyl-CoA carboxylase activity"/>
    <property type="evidence" value="ECO:0000314"/>
    <property type="project" value="MTBBASE"/>
</dbReference>
<dbReference type="GO" id="GO:0016740">
    <property type="term" value="F:transferase activity"/>
    <property type="evidence" value="ECO:0007669"/>
    <property type="project" value="UniProtKB-KW"/>
</dbReference>
<dbReference type="GO" id="GO:0015977">
    <property type="term" value="P:carbon fixation"/>
    <property type="evidence" value="ECO:0000314"/>
    <property type="project" value="MTBBASE"/>
</dbReference>
<dbReference type="GO" id="GO:0071769">
    <property type="term" value="P:mycolate cell wall layer assembly"/>
    <property type="evidence" value="ECO:0000315"/>
    <property type="project" value="MTBBASE"/>
</dbReference>
<dbReference type="FunFam" id="3.90.226.10:FF:000017">
    <property type="entry name" value="Propionyl-CoA carboxylase subunit beta 5"/>
    <property type="match status" value="1"/>
</dbReference>
<dbReference type="FunFam" id="3.90.226.10:FF:000016">
    <property type="entry name" value="Propionyl-CoA carboxylase, beta subunit"/>
    <property type="match status" value="1"/>
</dbReference>
<dbReference type="Gene3D" id="3.90.226.10">
    <property type="entry name" value="2-enoyl-CoA Hydratase, Chain A, domain 1"/>
    <property type="match status" value="2"/>
</dbReference>
<dbReference type="InterPro" id="IPR051047">
    <property type="entry name" value="AccD/PCCB"/>
</dbReference>
<dbReference type="InterPro" id="IPR034733">
    <property type="entry name" value="AcCoA_carboxyl_beta"/>
</dbReference>
<dbReference type="InterPro" id="IPR029045">
    <property type="entry name" value="ClpP/crotonase-like_dom_sf"/>
</dbReference>
<dbReference type="InterPro" id="IPR011763">
    <property type="entry name" value="COA_CT_C"/>
</dbReference>
<dbReference type="InterPro" id="IPR011762">
    <property type="entry name" value="COA_CT_N"/>
</dbReference>
<dbReference type="PANTHER" id="PTHR43842">
    <property type="entry name" value="PROPIONYL-COA CARBOXYLASE BETA CHAIN"/>
    <property type="match status" value="1"/>
</dbReference>
<dbReference type="PANTHER" id="PTHR43842:SF2">
    <property type="entry name" value="PROPIONYL-COA CARBOXYLASE BETA CHAIN, MITOCHONDRIAL"/>
    <property type="match status" value="1"/>
</dbReference>
<dbReference type="Pfam" id="PF01039">
    <property type="entry name" value="Carboxyl_trans"/>
    <property type="match status" value="1"/>
</dbReference>
<dbReference type="SUPFAM" id="SSF52096">
    <property type="entry name" value="ClpP/crotonase"/>
    <property type="match status" value="2"/>
</dbReference>
<dbReference type="PROSITE" id="PS50989">
    <property type="entry name" value="COA_CT_CTER"/>
    <property type="match status" value="1"/>
</dbReference>
<dbReference type="PROSITE" id="PS50980">
    <property type="entry name" value="COA_CT_NTER"/>
    <property type="match status" value="1"/>
</dbReference>
<evidence type="ECO:0000255" key="1">
    <source>
        <dbReference type="PROSITE-ProRule" id="PRU01136"/>
    </source>
</evidence>
<evidence type="ECO:0000255" key="2">
    <source>
        <dbReference type="PROSITE-ProRule" id="PRU01137"/>
    </source>
</evidence>
<evidence type="ECO:0000269" key="3">
    <source>
    </source>
</evidence>
<evidence type="ECO:0000269" key="4">
    <source>
    </source>
</evidence>
<evidence type="ECO:0000269" key="5">
    <source>
    </source>
</evidence>
<evidence type="ECO:0000303" key="6">
    <source>
    </source>
</evidence>
<evidence type="ECO:0000305" key="7"/>
<evidence type="ECO:0000312" key="8">
    <source>
        <dbReference type="EMBL" id="CCP46628.1"/>
    </source>
</evidence>
<sequence length="522" mass="56680">MTVTEPVLHTTAEKLAELRERLELAKEPGGEKAAAKRDKKGIPSARARIYELVDPGSFMEIGALCRTPGDPNALYGDGVVTGHGLINGRPVGVFSHDQTVFGGTVGEMFGRKVARLMEWCAMVGCPIVGINDSGGARIQDAVTSLAWYAELGRRHELLSGLVPQISIILGKCAGGAVYSPIQTDLVVAVRDQGYMFVTGPDVIKDVTGEDVSLDELGGADHQASYGNIHQVVESEAAAYQYVRDFLSFLPSNCFDKPPVVNPGLEPEITGHDLELDSIVPDSDNMAYDMHEVLLRIFDDGDFLDVAAQAGQAIITGYARVDGRTVGVVANQPMHMSGAIDNEASDKAARFIRFSDAFDIPLVFVVDTPGFLPGVEQEKNGIIKRGGRFLYAVVEADVPKVTITIRKSYGGAYAVMGSKQLTADLNFAWPTARIAVIGADGAAQLLMKRFPDPNAPEAQAIRKSFVENYNLNMAIPWIAAERGFIDAVIDPHETRLLLRKSMHLLRDKQLWWRVGRKHGLIPV</sequence>
<name>ACCD4_MYCTU</name>
<organism>
    <name type="scientific">Mycobacterium tuberculosis (strain ATCC 25618 / H37Rv)</name>
    <dbReference type="NCBI Taxonomy" id="83332"/>
    <lineage>
        <taxon>Bacteria</taxon>
        <taxon>Bacillati</taxon>
        <taxon>Actinomycetota</taxon>
        <taxon>Actinomycetes</taxon>
        <taxon>Mycobacteriales</taxon>
        <taxon>Mycobacteriaceae</taxon>
        <taxon>Mycobacterium</taxon>
        <taxon>Mycobacterium tuberculosis complex</taxon>
    </lineage>
</organism>
<gene>
    <name evidence="6" type="primary">accD4</name>
    <name evidence="8" type="ordered locus">Rv3799c</name>
</gene>
<protein>
    <recommendedName>
        <fullName evidence="7">Biotin-dependent long chain acyl-coenzyme A carboxylase beta4 subunit</fullName>
        <ecNumber evidence="3 5">2.1.3.-</ecNumber>
    </recommendedName>
</protein>
<reference key="1">
    <citation type="journal article" date="1998" name="Nature">
        <title>Deciphering the biology of Mycobacterium tuberculosis from the complete genome sequence.</title>
        <authorList>
            <person name="Cole S.T."/>
            <person name="Brosch R."/>
            <person name="Parkhill J."/>
            <person name="Garnier T."/>
            <person name="Churcher C.M."/>
            <person name="Harris D.E."/>
            <person name="Gordon S.V."/>
            <person name="Eiglmeier K."/>
            <person name="Gas S."/>
            <person name="Barry C.E. III"/>
            <person name="Tekaia F."/>
            <person name="Badcock K."/>
            <person name="Basham D."/>
            <person name="Brown D."/>
            <person name="Chillingworth T."/>
            <person name="Connor R."/>
            <person name="Davies R.M."/>
            <person name="Devlin K."/>
            <person name="Feltwell T."/>
            <person name="Gentles S."/>
            <person name="Hamlin N."/>
            <person name="Holroyd S."/>
            <person name="Hornsby T."/>
            <person name="Jagels K."/>
            <person name="Krogh A."/>
            <person name="McLean J."/>
            <person name="Moule S."/>
            <person name="Murphy L.D."/>
            <person name="Oliver S."/>
            <person name="Osborne J."/>
            <person name="Quail M.A."/>
            <person name="Rajandream M.A."/>
            <person name="Rogers J."/>
            <person name="Rutter S."/>
            <person name="Seeger K."/>
            <person name="Skelton S."/>
            <person name="Squares S."/>
            <person name="Squares R."/>
            <person name="Sulston J.E."/>
            <person name="Taylor K."/>
            <person name="Whitehead S."/>
            <person name="Barrell B.G."/>
        </authorList>
    </citation>
    <scope>NUCLEOTIDE SEQUENCE [LARGE SCALE GENOMIC DNA]</scope>
    <source>
        <strain>ATCC 25618 / H37Rv</strain>
    </source>
</reference>
<reference key="2">
    <citation type="journal article" date="2006" name="J. Biol. Chem.">
        <title>Identification and characterization of Rv3281 as a novel subunit of a biotin-dependent acyl-CoA carboxylase in Mycobacterium tuberculosis H37Rv.</title>
        <authorList>
            <person name="Oh T.J."/>
            <person name="Daniel J."/>
            <person name="Kim H.J."/>
            <person name="Sirakova T.D."/>
            <person name="Kolattukudy P.E."/>
        </authorList>
    </citation>
    <scope>PROTEIN SEQUENCE OF 3-8</scope>
    <scope>FUNCTION</scope>
    <scope>CATALYTIC ACTIVITY</scope>
    <scope>SUBUNIT</scope>
</reference>
<reference key="3">
    <citation type="journal article" date="2007" name="J. Bacteriol.">
        <title>AccD6, a member of the Fas II locus, is a functional carboxyltransferase subunit of the acyl-coenzyme A carboxylase in Mycobacterium tuberculosis.</title>
        <authorList>
            <person name="Daniel J."/>
            <person name="Oh T.J."/>
            <person name="Lee C.M."/>
            <person name="Kolattukudy P.E."/>
        </authorList>
    </citation>
    <scope>INDUCTION</scope>
    <source>
        <strain>H37Rv</strain>
    </source>
</reference>
<reference key="4">
    <citation type="journal article" date="2011" name="Mol. Cell. Proteomics">
        <title>Proteogenomic analysis of Mycobacterium tuberculosis by high resolution mass spectrometry.</title>
        <authorList>
            <person name="Kelkar D.S."/>
            <person name="Kumar D."/>
            <person name="Kumar P."/>
            <person name="Balakrishnan L."/>
            <person name="Muthusamy B."/>
            <person name="Yadav A.K."/>
            <person name="Shrivastava P."/>
            <person name="Marimuthu A."/>
            <person name="Anand S."/>
            <person name="Sundaram H."/>
            <person name="Kingsbury R."/>
            <person name="Harsha H.C."/>
            <person name="Nair B."/>
            <person name="Prasad T.S."/>
            <person name="Chauhan D.S."/>
            <person name="Katoch K."/>
            <person name="Katoch V.M."/>
            <person name="Kumar P."/>
            <person name="Chaerkady R."/>
            <person name="Ramachandran S."/>
            <person name="Dash D."/>
            <person name="Pandey A."/>
        </authorList>
    </citation>
    <scope>IDENTIFICATION BY MASS SPECTROMETRY [LARGE SCALE ANALYSIS]</scope>
    <source>
        <strain>ATCC 25618 / H37Rv</strain>
    </source>
</reference>
<reference key="5">
    <citation type="journal article" date="2017" name="FEBS J.">
        <title>Functional reconstitution of the Mycobacterium tuberculosis long-chain acyl-CoA carboxylase from multiple acyl-CoA subunits.</title>
        <authorList>
            <person name="Bazet Lyonnet B."/>
            <person name="Diacovich L."/>
            <person name="Gago G."/>
            <person name="Spina L."/>
            <person name="Bardou F."/>
            <person name="Lemassu A."/>
            <person name="Quemard A."/>
            <person name="Gramajo H."/>
        </authorList>
    </citation>
    <scope>FUNCTION</scope>
    <scope>CATALYTIC ACTIVITY</scope>
    <scope>BIOPHYSICOCHEMICAL PROPERTIES</scope>
    <scope>SUBUNIT</scope>
</reference>